<organism>
    <name type="scientific">Rhizobium meliloti (strain 1021)</name>
    <name type="common">Ensifer meliloti</name>
    <name type="synonym">Sinorhizobium meliloti</name>
    <dbReference type="NCBI Taxonomy" id="266834"/>
    <lineage>
        <taxon>Bacteria</taxon>
        <taxon>Pseudomonadati</taxon>
        <taxon>Pseudomonadota</taxon>
        <taxon>Alphaproteobacteria</taxon>
        <taxon>Hyphomicrobiales</taxon>
        <taxon>Rhizobiaceae</taxon>
        <taxon>Sinorhizobium/Ensifer group</taxon>
        <taxon>Sinorhizobium</taxon>
    </lineage>
</organism>
<dbReference type="EC" id="2.1.3.15" evidence="1"/>
<dbReference type="EMBL" id="AL591688">
    <property type="protein sequence ID" value="CAC41417.1"/>
    <property type="molecule type" value="Genomic_DNA"/>
</dbReference>
<dbReference type="RefSeq" id="NP_384136.1">
    <property type="nucleotide sequence ID" value="NC_003047.1"/>
</dbReference>
<dbReference type="RefSeq" id="WP_003536448.1">
    <property type="nucleotide sequence ID" value="NC_003047.1"/>
</dbReference>
<dbReference type="SMR" id="Q92TC7"/>
<dbReference type="EnsemblBacteria" id="CAC41417">
    <property type="protein sequence ID" value="CAC41417"/>
    <property type="gene ID" value="SMc02764"/>
</dbReference>
<dbReference type="GeneID" id="89574346"/>
<dbReference type="KEGG" id="sme:SMc02764"/>
<dbReference type="PATRIC" id="fig|266834.11.peg.1383"/>
<dbReference type="eggNOG" id="COG0777">
    <property type="taxonomic scope" value="Bacteria"/>
</dbReference>
<dbReference type="HOGENOM" id="CLU_015486_1_0_5"/>
<dbReference type="OrthoDB" id="9772975at2"/>
<dbReference type="UniPathway" id="UPA00655">
    <property type="reaction ID" value="UER00711"/>
</dbReference>
<dbReference type="Proteomes" id="UP000001976">
    <property type="component" value="Chromosome"/>
</dbReference>
<dbReference type="GO" id="GO:0009329">
    <property type="term" value="C:acetate CoA-transferase complex"/>
    <property type="evidence" value="ECO:0007669"/>
    <property type="project" value="TreeGrafter"/>
</dbReference>
<dbReference type="GO" id="GO:0003989">
    <property type="term" value="F:acetyl-CoA carboxylase activity"/>
    <property type="evidence" value="ECO:0007669"/>
    <property type="project" value="InterPro"/>
</dbReference>
<dbReference type="GO" id="GO:0005524">
    <property type="term" value="F:ATP binding"/>
    <property type="evidence" value="ECO:0007669"/>
    <property type="project" value="UniProtKB-KW"/>
</dbReference>
<dbReference type="GO" id="GO:0016743">
    <property type="term" value="F:carboxyl- or carbamoyltransferase activity"/>
    <property type="evidence" value="ECO:0007669"/>
    <property type="project" value="UniProtKB-UniRule"/>
</dbReference>
<dbReference type="GO" id="GO:0006633">
    <property type="term" value="P:fatty acid biosynthetic process"/>
    <property type="evidence" value="ECO:0007669"/>
    <property type="project" value="UniProtKB-KW"/>
</dbReference>
<dbReference type="GO" id="GO:2001295">
    <property type="term" value="P:malonyl-CoA biosynthetic process"/>
    <property type="evidence" value="ECO:0007669"/>
    <property type="project" value="UniProtKB-UniRule"/>
</dbReference>
<dbReference type="Gene3D" id="3.90.226.10">
    <property type="entry name" value="2-enoyl-CoA Hydratase, Chain A, domain 1"/>
    <property type="match status" value="1"/>
</dbReference>
<dbReference type="HAMAP" id="MF_01395">
    <property type="entry name" value="AcetylCoA_CT_beta"/>
    <property type="match status" value="1"/>
</dbReference>
<dbReference type="InterPro" id="IPR034733">
    <property type="entry name" value="AcCoA_carboxyl_beta"/>
</dbReference>
<dbReference type="InterPro" id="IPR000438">
    <property type="entry name" value="Acetyl_CoA_COase_Trfase_b_su"/>
</dbReference>
<dbReference type="InterPro" id="IPR029045">
    <property type="entry name" value="ClpP/crotonase-like_dom_sf"/>
</dbReference>
<dbReference type="InterPro" id="IPR011762">
    <property type="entry name" value="COA_CT_N"/>
</dbReference>
<dbReference type="NCBIfam" id="TIGR00515">
    <property type="entry name" value="accD"/>
    <property type="match status" value="1"/>
</dbReference>
<dbReference type="PANTHER" id="PTHR42995">
    <property type="entry name" value="ACETYL-COENZYME A CARBOXYLASE CARBOXYL TRANSFERASE SUBUNIT BETA, CHLOROPLASTIC"/>
    <property type="match status" value="1"/>
</dbReference>
<dbReference type="PANTHER" id="PTHR42995:SF5">
    <property type="entry name" value="ACETYL-COENZYME A CARBOXYLASE CARBOXYL TRANSFERASE SUBUNIT BETA, CHLOROPLASTIC"/>
    <property type="match status" value="1"/>
</dbReference>
<dbReference type="Pfam" id="PF01039">
    <property type="entry name" value="Carboxyl_trans"/>
    <property type="match status" value="1"/>
</dbReference>
<dbReference type="PRINTS" id="PR01070">
    <property type="entry name" value="ACCCTRFRASEB"/>
</dbReference>
<dbReference type="SUPFAM" id="SSF52096">
    <property type="entry name" value="ClpP/crotonase"/>
    <property type="match status" value="1"/>
</dbReference>
<dbReference type="PROSITE" id="PS50980">
    <property type="entry name" value="COA_CT_NTER"/>
    <property type="match status" value="1"/>
</dbReference>
<proteinExistence type="inferred from homology"/>
<gene>
    <name evidence="1" type="primary">accD</name>
    <name type="ordered locus">R00030</name>
    <name type="ORF">SMc02764</name>
</gene>
<accession>Q92TC7</accession>
<name>ACCD_RHIME</name>
<sequence>MNWITNYVRPKINSMLGRREVPENLWIKCPETGEMVFHRDLEENKWVIPQSGFHMKMPAKARLKDLFDGGIYEAFPQPKVAQDPLKFRDSKKYSDRLRDSRAKTELEDTIVAGLGQVQGIKLVAVAHEFNFIGGSLGIAAGEAIVKAFERAIAEKCPLVMFPASGGARMQEGILSLMQLPRTTVALNMLKEAGLPYIVVLTNPTTGGVTASYAMLGDIHMAEPGAEIGFAGKRVIEQTLREKLPEGFQTSEYLLEHGMVDMVVKRHDIPETLARVLNILMKKPAKAVKRDTATELAPLPVAASA</sequence>
<comment type="function">
    <text evidence="1">Component of the acetyl coenzyme A carboxylase (ACC) complex. Biotin carboxylase (BC) catalyzes the carboxylation of biotin on its carrier protein (BCCP) and then the CO(2) group is transferred by the transcarboxylase to acetyl-CoA to form malonyl-CoA.</text>
</comment>
<comment type="catalytic activity">
    <reaction evidence="1">
        <text>N(6)-carboxybiotinyl-L-lysyl-[protein] + acetyl-CoA = N(6)-biotinyl-L-lysyl-[protein] + malonyl-CoA</text>
        <dbReference type="Rhea" id="RHEA:54728"/>
        <dbReference type="Rhea" id="RHEA-COMP:10505"/>
        <dbReference type="Rhea" id="RHEA-COMP:10506"/>
        <dbReference type="ChEBI" id="CHEBI:57288"/>
        <dbReference type="ChEBI" id="CHEBI:57384"/>
        <dbReference type="ChEBI" id="CHEBI:83144"/>
        <dbReference type="ChEBI" id="CHEBI:83145"/>
        <dbReference type="EC" id="2.1.3.15"/>
    </reaction>
</comment>
<comment type="pathway">
    <text evidence="1">Lipid metabolism; malonyl-CoA biosynthesis; malonyl-CoA from acetyl-CoA: step 1/1.</text>
</comment>
<comment type="subunit">
    <text evidence="1">Acetyl-CoA carboxylase is a heterohexamer composed of biotin carboxyl carrier protein (AccB), biotin carboxylase (AccC) and two subunits each of ACCase subunit alpha (AccA) and ACCase subunit beta (AccD).</text>
</comment>
<comment type="subcellular location">
    <subcellularLocation>
        <location evidence="1">Cytoplasm</location>
    </subcellularLocation>
</comment>
<comment type="similarity">
    <text evidence="1">Belongs to the AccD/PCCB family.</text>
</comment>
<feature type="chain" id="PRO_0000389830" description="Acetyl-coenzyme A carboxylase carboxyl transferase subunit beta">
    <location>
        <begin position="1"/>
        <end position="304"/>
    </location>
</feature>
<feature type="domain" description="CoA carboxyltransferase N-terminal" evidence="2">
    <location>
        <begin position="25"/>
        <end position="294"/>
    </location>
</feature>
<keyword id="KW-0067">ATP-binding</keyword>
<keyword id="KW-0963">Cytoplasm</keyword>
<keyword id="KW-0275">Fatty acid biosynthesis</keyword>
<keyword id="KW-0276">Fatty acid metabolism</keyword>
<keyword id="KW-0444">Lipid biosynthesis</keyword>
<keyword id="KW-0443">Lipid metabolism</keyword>
<keyword id="KW-0547">Nucleotide-binding</keyword>
<keyword id="KW-1185">Reference proteome</keyword>
<keyword id="KW-0808">Transferase</keyword>
<reference key="1">
    <citation type="journal article" date="2001" name="Proc. Natl. Acad. Sci. U.S.A.">
        <title>Analysis of the chromosome sequence of the legume symbiont Sinorhizobium meliloti strain 1021.</title>
        <authorList>
            <person name="Capela D."/>
            <person name="Barloy-Hubler F."/>
            <person name="Gouzy J."/>
            <person name="Bothe G."/>
            <person name="Ampe F."/>
            <person name="Batut J."/>
            <person name="Boistard P."/>
            <person name="Becker A."/>
            <person name="Boutry M."/>
            <person name="Cadieu E."/>
            <person name="Dreano S."/>
            <person name="Gloux S."/>
            <person name="Godrie T."/>
            <person name="Goffeau A."/>
            <person name="Kahn D."/>
            <person name="Kiss E."/>
            <person name="Lelaure V."/>
            <person name="Masuy D."/>
            <person name="Pohl T."/>
            <person name="Portetelle D."/>
            <person name="Puehler A."/>
            <person name="Purnelle B."/>
            <person name="Ramsperger U."/>
            <person name="Renard C."/>
            <person name="Thebault P."/>
            <person name="Vandenbol M."/>
            <person name="Weidner S."/>
            <person name="Galibert F."/>
        </authorList>
    </citation>
    <scope>NUCLEOTIDE SEQUENCE [LARGE SCALE GENOMIC DNA]</scope>
    <source>
        <strain>1021</strain>
    </source>
</reference>
<reference key="2">
    <citation type="journal article" date="2001" name="Science">
        <title>The composite genome of the legume symbiont Sinorhizobium meliloti.</title>
        <authorList>
            <person name="Galibert F."/>
            <person name="Finan T.M."/>
            <person name="Long S.R."/>
            <person name="Puehler A."/>
            <person name="Abola P."/>
            <person name="Ampe F."/>
            <person name="Barloy-Hubler F."/>
            <person name="Barnett M.J."/>
            <person name="Becker A."/>
            <person name="Boistard P."/>
            <person name="Bothe G."/>
            <person name="Boutry M."/>
            <person name="Bowser L."/>
            <person name="Buhrmester J."/>
            <person name="Cadieu E."/>
            <person name="Capela D."/>
            <person name="Chain P."/>
            <person name="Cowie A."/>
            <person name="Davis R.W."/>
            <person name="Dreano S."/>
            <person name="Federspiel N.A."/>
            <person name="Fisher R.F."/>
            <person name="Gloux S."/>
            <person name="Godrie T."/>
            <person name="Goffeau A."/>
            <person name="Golding B."/>
            <person name="Gouzy J."/>
            <person name="Gurjal M."/>
            <person name="Hernandez-Lucas I."/>
            <person name="Hong A."/>
            <person name="Huizar L."/>
            <person name="Hyman R.W."/>
            <person name="Jones T."/>
            <person name="Kahn D."/>
            <person name="Kahn M.L."/>
            <person name="Kalman S."/>
            <person name="Keating D.H."/>
            <person name="Kiss E."/>
            <person name="Komp C."/>
            <person name="Lelaure V."/>
            <person name="Masuy D."/>
            <person name="Palm C."/>
            <person name="Peck M.C."/>
            <person name="Pohl T.M."/>
            <person name="Portetelle D."/>
            <person name="Purnelle B."/>
            <person name="Ramsperger U."/>
            <person name="Surzycki R."/>
            <person name="Thebault P."/>
            <person name="Vandenbol M."/>
            <person name="Vorhoelter F.J."/>
            <person name="Weidner S."/>
            <person name="Wells D.H."/>
            <person name="Wong K."/>
            <person name="Yeh K.-C."/>
            <person name="Batut J."/>
        </authorList>
    </citation>
    <scope>NUCLEOTIDE SEQUENCE [LARGE SCALE GENOMIC DNA]</scope>
    <source>
        <strain>1021</strain>
    </source>
</reference>
<protein>
    <recommendedName>
        <fullName evidence="1">Acetyl-coenzyme A carboxylase carboxyl transferase subunit beta</fullName>
        <shortName evidence="1">ACCase subunit beta</shortName>
        <shortName evidence="1">Acetyl-CoA carboxylase carboxyltransferase subunit beta</shortName>
        <ecNumber evidence="1">2.1.3.15</ecNumber>
    </recommendedName>
</protein>
<evidence type="ECO:0000255" key="1">
    <source>
        <dbReference type="HAMAP-Rule" id="MF_01395"/>
    </source>
</evidence>
<evidence type="ECO:0000255" key="2">
    <source>
        <dbReference type="PROSITE-ProRule" id="PRU01136"/>
    </source>
</evidence>